<organism>
    <name type="scientific">Levilactobacillus brevis (strain ATCC 367 / BCRC 12310 / CIP 105137 / JCM 1170 / LMG 11437 / NCIMB 947 / NCTC 947)</name>
    <name type="common">Lactobacillus brevis</name>
    <dbReference type="NCBI Taxonomy" id="387344"/>
    <lineage>
        <taxon>Bacteria</taxon>
        <taxon>Bacillati</taxon>
        <taxon>Bacillota</taxon>
        <taxon>Bacilli</taxon>
        <taxon>Lactobacillales</taxon>
        <taxon>Lactobacillaceae</taxon>
        <taxon>Levilactobacillus</taxon>
    </lineage>
</organism>
<reference key="1">
    <citation type="journal article" date="2006" name="Proc. Natl. Acad. Sci. U.S.A.">
        <title>Comparative genomics of the lactic acid bacteria.</title>
        <authorList>
            <person name="Makarova K.S."/>
            <person name="Slesarev A."/>
            <person name="Wolf Y.I."/>
            <person name="Sorokin A."/>
            <person name="Mirkin B."/>
            <person name="Koonin E.V."/>
            <person name="Pavlov A."/>
            <person name="Pavlova N."/>
            <person name="Karamychev V."/>
            <person name="Polouchine N."/>
            <person name="Shakhova V."/>
            <person name="Grigoriev I."/>
            <person name="Lou Y."/>
            <person name="Rohksar D."/>
            <person name="Lucas S."/>
            <person name="Huang K."/>
            <person name="Goodstein D.M."/>
            <person name="Hawkins T."/>
            <person name="Plengvidhya V."/>
            <person name="Welker D."/>
            <person name="Hughes J."/>
            <person name="Goh Y."/>
            <person name="Benson A."/>
            <person name="Baldwin K."/>
            <person name="Lee J.-H."/>
            <person name="Diaz-Muniz I."/>
            <person name="Dosti B."/>
            <person name="Smeianov V."/>
            <person name="Wechter W."/>
            <person name="Barabote R."/>
            <person name="Lorca G."/>
            <person name="Altermann E."/>
            <person name="Barrangou R."/>
            <person name="Ganesan B."/>
            <person name="Xie Y."/>
            <person name="Rawsthorne H."/>
            <person name="Tamir D."/>
            <person name="Parker C."/>
            <person name="Breidt F."/>
            <person name="Broadbent J.R."/>
            <person name="Hutkins R."/>
            <person name="O'Sullivan D."/>
            <person name="Steele J."/>
            <person name="Unlu G."/>
            <person name="Saier M.H. Jr."/>
            <person name="Klaenhammer T."/>
            <person name="Richardson P."/>
            <person name="Kozyavkin S."/>
            <person name="Weimer B.C."/>
            <person name="Mills D.A."/>
        </authorList>
    </citation>
    <scope>NUCLEOTIDE SEQUENCE [LARGE SCALE GENOMIC DNA]</scope>
    <source>
        <strain>ATCC 367 / BCRC 12310 / CIP 105137 / JCM 1170 / LMG 11437 / NCIMB 947 / NCTC 947</strain>
    </source>
</reference>
<comment type="function">
    <text evidence="1">Excises uracil residues from the DNA which can arise as a result of misincorporation of dUMP residues by DNA polymerase or due to deamination of cytosine.</text>
</comment>
<comment type="catalytic activity">
    <reaction evidence="1">
        <text>Hydrolyzes single-stranded DNA or mismatched double-stranded DNA and polynucleotides, releasing free uracil.</text>
        <dbReference type="EC" id="3.2.2.27"/>
    </reaction>
</comment>
<comment type="subcellular location">
    <subcellularLocation>
        <location evidence="1">Cytoplasm</location>
    </subcellularLocation>
</comment>
<comment type="similarity">
    <text evidence="1">Belongs to the uracil-DNA glycosylase (UDG) superfamily. UNG family.</text>
</comment>
<sequence>MKPFIHNDWWPVLEPEFEKPYYQELRRFLVEEYQHYRIDPDMYHIFTAFEWTPFSQVKVVILGQDPYHNPGQAHGCSFSVLPGTEIPPSLVNIYKELQDDLGVQPVQHGYLKHWADQGVLLLNSVLTVRDGIKTANTHRGHGWEQLTDSAIEKLSARPEPVIFILWGSAARSKIKLIDTQTNIVLQSPHPSPLSAYRGFFGSKPFSKTNIALTSLGETPIDWQLPQQVTISDESTSDTH</sequence>
<proteinExistence type="inferred from homology"/>
<keyword id="KW-0963">Cytoplasm</keyword>
<keyword id="KW-0227">DNA damage</keyword>
<keyword id="KW-0234">DNA repair</keyword>
<keyword id="KW-0378">Hydrolase</keyword>
<keyword id="KW-1185">Reference proteome</keyword>
<protein>
    <recommendedName>
        <fullName evidence="1">Uracil-DNA glycosylase</fullName>
        <shortName evidence="1">UDG</shortName>
        <ecNumber evidence="1">3.2.2.27</ecNumber>
    </recommendedName>
</protein>
<accession>Q03SK6</accession>
<name>UNG_LEVBA</name>
<dbReference type="EC" id="3.2.2.27" evidence="1"/>
<dbReference type="EMBL" id="CP000416">
    <property type="protein sequence ID" value="ABJ63816.1"/>
    <property type="molecule type" value="Genomic_DNA"/>
</dbReference>
<dbReference type="RefSeq" id="WP_011667448.1">
    <property type="nucleotide sequence ID" value="NC_008497.1"/>
</dbReference>
<dbReference type="SMR" id="Q03SK6"/>
<dbReference type="STRING" id="387344.LVIS_0673"/>
<dbReference type="KEGG" id="lbr:LVIS_0673"/>
<dbReference type="PATRIC" id="fig|387344.15.peg.651"/>
<dbReference type="eggNOG" id="COG0692">
    <property type="taxonomic scope" value="Bacteria"/>
</dbReference>
<dbReference type="HOGENOM" id="CLU_032162_3_0_9"/>
<dbReference type="Proteomes" id="UP000001652">
    <property type="component" value="Chromosome"/>
</dbReference>
<dbReference type="GO" id="GO:0005737">
    <property type="term" value="C:cytoplasm"/>
    <property type="evidence" value="ECO:0007669"/>
    <property type="project" value="UniProtKB-SubCell"/>
</dbReference>
<dbReference type="GO" id="GO:0004844">
    <property type="term" value="F:uracil DNA N-glycosylase activity"/>
    <property type="evidence" value="ECO:0007669"/>
    <property type="project" value="UniProtKB-UniRule"/>
</dbReference>
<dbReference type="GO" id="GO:0097510">
    <property type="term" value="P:base-excision repair, AP site formation via deaminated base removal"/>
    <property type="evidence" value="ECO:0007669"/>
    <property type="project" value="TreeGrafter"/>
</dbReference>
<dbReference type="CDD" id="cd10027">
    <property type="entry name" value="UDG-F1-like"/>
    <property type="match status" value="1"/>
</dbReference>
<dbReference type="FunFam" id="3.40.470.10:FF:000001">
    <property type="entry name" value="Uracil-DNA glycosylase"/>
    <property type="match status" value="1"/>
</dbReference>
<dbReference type="Gene3D" id="3.40.470.10">
    <property type="entry name" value="Uracil-DNA glycosylase-like domain"/>
    <property type="match status" value="1"/>
</dbReference>
<dbReference type="HAMAP" id="MF_00148">
    <property type="entry name" value="UDG"/>
    <property type="match status" value="1"/>
</dbReference>
<dbReference type="InterPro" id="IPR002043">
    <property type="entry name" value="UDG_fam1"/>
</dbReference>
<dbReference type="InterPro" id="IPR018085">
    <property type="entry name" value="Ura-DNA_Glyclase_AS"/>
</dbReference>
<dbReference type="InterPro" id="IPR005122">
    <property type="entry name" value="Uracil-DNA_glycosylase-like"/>
</dbReference>
<dbReference type="InterPro" id="IPR036895">
    <property type="entry name" value="Uracil-DNA_glycosylase-like_sf"/>
</dbReference>
<dbReference type="NCBIfam" id="NF003588">
    <property type="entry name" value="PRK05254.1-1"/>
    <property type="match status" value="1"/>
</dbReference>
<dbReference type="NCBIfam" id="NF003589">
    <property type="entry name" value="PRK05254.1-2"/>
    <property type="match status" value="1"/>
</dbReference>
<dbReference type="NCBIfam" id="NF003592">
    <property type="entry name" value="PRK05254.1-5"/>
    <property type="match status" value="1"/>
</dbReference>
<dbReference type="NCBIfam" id="TIGR00628">
    <property type="entry name" value="ung"/>
    <property type="match status" value="1"/>
</dbReference>
<dbReference type="PANTHER" id="PTHR11264">
    <property type="entry name" value="URACIL-DNA GLYCOSYLASE"/>
    <property type="match status" value="1"/>
</dbReference>
<dbReference type="PANTHER" id="PTHR11264:SF0">
    <property type="entry name" value="URACIL-DNA GLYCOSYLASE"/>
    <property type="match status" value="1"/>
</dbReference>
<dbReference type="Pfam" id="PF03167">
    <property type="entry name" value="UDG"/>
    <property type="match status" value="1"/>
</dbReference>
<dbReference type="SMART" id="SM00986">
    <property type="entry name" value="UDG"/>
    <property type="match status" value="1"/>
</dbReference>
<dbReference type="SMART" id="SM00987">
    <property type="entry name" value="UreE_C"/>
    <property type="match status" value="1"/>
</dbReference>
<dbReference type="SUPFAM" id="SSF52141">
    <property type="entry name" value="Uracil-DNA glycosylase-like"/>
    <property type="match status" value="1"/>
</dbReference>
<dbReference type="PROSITE" id="PS00130">
    <property type="entry name" value="U_DNA_GLYCOSYLASE"/>
    <property type="match status" value="1"/>
</dbReference>
<gene>
    <name evidence="1" type="primary">ung</name>
    <name type="ordered locus">LVIS_0673</name>
</gene>
<feature type="chain" id="PRO_1000009902" description="Uracil-DNA glycosylase">
    <location>
        <begin position="1"/>
        <end position="239"/>
    </location>
</feature>
<feature type="active site" description="Proton acceptor" evidence="1">
    <location>
        <position position="65"/>
    </location>
</feature>
<evidence type="ECO:0000255" key="1">
    <source>
        <dbReference type="HAMAP-Rule" id="MF_00148"/>
    </source>
</evidence>